<gene>
    <name evidence="1" type="primary">pfk</name>
</gene>
<reference key="1">
    <citation type="journal article" date="2002" name="Eur. J. Biochem.">
        <title>Leishmania donovani phosphofructokinase. Gene characterization, biochemical properties and structure-modeling studies.</title>
        <authorList>
            <person name="Lopez C."/>
            <person name="Chevalier N."/>
            <person name="Hannaert V."/>
            <person name="Rigden D.J."/>
            <person name="Michels P.A."/>
            <person name="Ramirez J.L."/>
        </authorList>
    </citation>
    <scope>NUCLEOTIDE SEQUENCE [GENOMIC DNA]</scope>
    <scope>FUNCTION</scope>
    <scope>CATALYTIC ACTIVITY</scope>
    <scope>BIOPHYSICOCHEMICAL PROPERTIES</scope>
    <scope>ACTIVITY REGULATION</scope>
    <scope>MUTAGENESIS OF LYS-224</scope>
    <source>
        <strain>LSB-51.1</strain>
    </source>
</reference>
<comment type="function">
    <text evidence="1 2">Catalyzes the phosphorylation of D-fructose 6-phosphate to fructose 1,6-bisphosphate by ATP, the first committing step of glycolysis.</text>
</comment>
<comment type="catalytic activity">
    <reaction evidence="1 2">
        <text>beta-D-fructose 6-phosphate + ATP = beta-D-fructose 1,6-bisphosphate + ADP + H(+)</text>
        <dbReference type="Rhea" id="RHEA:16109"/>
        <dbReference type="ChEBI" id="CHEBI:15378"/>
        <dbReference type="ChEBI" id="CHEBI:30616"/>
        <dbReference type="ChEBI" id="CHEBI:32966"/>
        <dbReference type="ChEBI" id="CHEBI:57634"/>
        <dbReference type="ChEBI" id="CHEBI:456216"/>
        <dbReference type="EC" id="2.7.1.11"/>
    </reaction>
</comment>
<comment type="cofactor">
    <cofactor evidence="1">
        <name>Mg(2+)</name>
        <dbReference type="ChEBI" id="CHEBI:18420"/>
    </cofactor>
</comment>
<comment type="activity regulation">
    <text evidence="1 2">Allosterically activated by AMP.</text>
</comment>
<comment type="biophysicochemical properties">
    <kinetics>
        <KM evidence="2">0.157 mM for fructose 6-phosphate</KM>
    </kinetics>
</comment>
<comment type="pathway">
    <text evidence="1">Carbohydrate degradation; glycolysis; D-glyceraldehyde 3-phosphate and glycerone phosphate from D-glucose: step 3/4.</text>
</comment>
<comment type="subunit">
    <text evidence="1">Homotetramer.</text>
</comment>
<comment type="subcellular location">
    <subcellularLocation>
        <location evidence="1">Glycosome</location>
    </subcellularLocation>
</comment>
<comment type="similarity">
    <text evidence="1">Belongs to the phosphofructokinase type A (PFKA) family. PPi-dependent PFK group II subfamily. Atypical ATP-dependent clade 'X' sub-subfamily.</text>
</comment>
<dbReference type="EC" id="2.7.1.11" evidence="1"/>
<dbReference type="EMBL" id="AY029213">
    <property type="protein sequence ID" value="AAK31633.1"/>
    <property type="molecule type" value="Genomic_DNA"/>
</dbReference>
<dbReference type="SMR" id="Q9BIC6"/>
<dbReference type="VEuPathDB" id="TriTrypDB:LdBPK_292620.1"/>
<dbReference type="VEuPathDB" id="TriTrypDB:LdCL_290032300"/>
<dbReference type="VEuPathDB" id="TriTrypDB:LDHU3_29.3880"/>
<dbReference type="SABIO-RK" id="Q9BIC6"/>
<dbReference type="UniPathway" id="UPA00109">
    <property type="reaction ID" value="UER00182"/>
</dbReference>
<dbReference type="GO" id="GO:0020015">
    <property type="term" value="C:glycosome"/>
    <property type="evidence" value="ECO:0007669"/>
    <property type="project" value="UniProtKB-SubCell"/>
</dbReference>
<dbReference type="GO" id="GO:0003872">
    <property type="term" value="F:6-phosphofructokinase activity"/>
    <property type="evidence" value="ECO:0007669"/>
    <property type="project" value="UniProtKB-UniRule"/>
</dbReference>
<dbReference type="GO" id="GO:0005524">
    <property type="term" value="F:ATP binding"/>
    <property type="evidence" value="ECO:0007669"/>
    <property type="project" value="UniProtKB-KW"/>
</dbReference>
<dbReference type="GO" id="GO:0046872">
    <property type="term" value="F:metal ion binding"/>
    <property type="evidence" value="ECO:0007669"/>
    <property type="project" value="UniProtKB-KW"/>
</dbReference>
<dbReference type="GO" id="GO:0006002">
    <property type="term" value="P:fructose 6-phosphate metabolic process"/>
    <property type="evidence" value="ECO:0007669"/>
    <property type="project" value="InterPro"/>
</dbReference>
<dbReference type="FunFam" id="3.40.50.450:FF:000002">
    <property type="entry name" value="ATP-dependent 6-phosphofructokinase"/>
    <property type="match status" value="1"/>
</dbReference>
<dbReference type="Gene3D" id="3.40.50.450">
    <property type="match status" value="2"/>
</dbReference>
<dbReference type="HAMAP" id="MF_01981">
    <property type="entry name" value="Phosphofructokinase_II_X"/>
    <property type="match status" value="1"/>
</dbReference>
<dbReference type="InterPro" id="IPR022953">
    <property type="entry name" value="ATP_PFK"/>
</dbReference>
<dbReference type="InterPro" id="IPR050929">
    <property type="entry name" value="PFKA"/>
</dbReference>
<dbReference type="InterPro" id="IPR000023">
    <property type="entry name" value="Phosphofructokinase_dom"/>
</dbReference>
<dbReference type="InterPro" id="IPR035966">
    <property type="entry name" value="PKF_sf"/>
</dbReference>
<dbReference type="InterPro" id="IPR012004">
    <property type="entry name" value="PyroP-dep_PFK_TP0108"/>
</dbReference>
<dbReference type="NCBIfam" id="NF005301">
    <property type="entry name" value="PRK06830.1"/>
    <property type="match status" value="1"/>
</dbReference>
<dbReference type="PANTHER" id="PTHR45770">
    <property type="entry name" value="ATP-DEPENDENT 6-PHOSPHOFRUCTOKINASE 1"/>
    <property type="match status" value="1"/>
</dbReference>
<dbReference type="Pfam" id="PF00365">
    <property type="entry name" value="PFK"/>
    <property type="match status" value="1"/>
</dbReference>
<dbReference type="PRINTS" id="PR00476">
    <property type="entry name" value="PHFRCTKINASE"/>
</dbReference>
<dbReference type="SUPFAM" id="SSF53784">
    <property type="entry name" value="Phosphofructokinase"/>
    <property type="match status" value="1"/>
</dbReference>
<accession>Q9BIC6</accession>
<sequence length="486" mass="53988">METRHHLNTKMVPSYQAPLSKVTAADLTVERLPGCKYMNPSKKHILREEYRDKVKHIMYDPRPQEDLDAEYPVSCNKLVCELAAARKHLHFNPSETSIGIVTCGGICPGLNDVIRSITLTGIISYRVKRVVGFRYGYWGLSKEGSKTAIELSRSDVRQIHRFGGTILGSSRGPQNPKEMVDTLVRMKINILFTVGGDGTQRGALTIYEEAKRPGENIAVFGVPKTIDNDLAFSHRTFGFQTAVEQAVNAVRAAYAEAVSLNYGVGIVKLMGRESGFIAAQTTVASAQANICLIPENPLPKETVMRLIERRLQQSRNCVIVVAEGFGQDWETGTGGHDASGNKKLVDIGFILKKEVESWLRANKEKFPQGTVKYIDPSYMIRACPPSSNDALFCTNLATLAVHEAMAGATGCIISMRYNNYILVPIKAATSVRRVVSLRGALWRQVREITVGLSDDVQQWNEQDLRRHLESLNVERERIIARLASKV</sequence>
<proteinExistence type="evidence at protein level"/>
<protein>
    <recommendedName>
        <fullName evidence="1">ATP-dependent 6-phosphofructokinase</fullName>
        <shortName evidence="1">ATP-PFK</shortName>
        <shortName evidence="1">Phosphofructokinase</shortName>
        <ecNumber evidence="1">2.7.1.11</ecNumber>
    </recommendedName>
    <alternativeName>
        <fullName evidence="1">Phosphohexokinase</fullName>
    </alternativeName>
</protein>
<keyword id="KW-0021">Allosteric enzyme</keyword>
<keyword id="KW-0067">ATP-binding</keyword>
<keyword id="KW-0324">Glycolysis</keyword>
<keyword id="KW-0327">Glycosome</keyword>
<keyword id="KW-0418">Kinase</keyword>
<keyword id="KW-0460">Magnesium</keyword>
<keyword id="KW-0479">Metal-binding</keyword>
<keyword id="KW-0547">Nucleotide-binding</keyword>
<keyword id="KW-0576">Peroxisome</keyword>
<keyword id="KW-0808">Transferase</keyword>
<organism>
    <name type="scientific">Leishmania donovani</name>
    <dbReference type="NCBI Taxonomy" id="5661"/>
    <lineage>
        <taxon>Eukaryota</taxon>
        <taxon>Discoba</taxon>
        <taxon>Euglenozoa</taxon>
        <taxon>Kinetoplastea</taxon>
        <taxon>Metakinetoplastina</taxon>
        <taxon>Trypanosomatida</taxon>
        <taxon>Trypanosomatidae</taxon>
        <taxon>Leishmaniinae</taxon>
        <taxon>Leishmania</taxon>
    </lineage>
</organism>
<evidence type="ECO:0000255" key="1">
    <source>
        <dbReference type="HAMAP-Rule" id="MF_03186"/>
    </source>
</evidence>
<evidence type="ECO:0000269" key="2">
    <source>
    </source>
</evidence>
<feature type="chain" id="PRO_0000429721" description="ATP-dependent 6-phosphofructokinase">
    <location>
        <begin position="1"/>
        <end position="486"/>
    </location>
</feature>
<feature type="short sequence motif" description="Peroxisomal targeting signal" evidence="1">
    <location>
        <begin position="484"/>
        <end position="486"/>
    </location>
</feature>
<feature type="active site" description="Proton acceptor" evidence="1">
    <location>
        <position position="227"/>
    </location>
</feature>
<feature type="binding site" evidence="1">
    <location>
        <position position="105"/>
    </location>
    <ligand>
        <name>ATP</name>
        <dbReference type="ChEBI" id="CHEBI:30616"/>
    </ligand>
</feature>
<feature type="binding site" evidence="1">
    <location>
        <begin position="171"/>
        <end position="172"/>
    </location>
    <ligand>
        <name>ATP</name>
        <dbReference type="ChEBI" id="CHEBI:30616"/>
    </ligand>
</feature>
<feature type="binding site" evidence="1">
    <location>
        <begin position="196"/>
        <end position="199"/>
    </location>
    <ligand>
        <name>ATP</name>
        <dbReference type="ChEBI" id="CHEBI:30616"/>
    </ligand>
</feature>
<feature type="binding site" evidence="1">
    <location>
        <position position="197"/>
    </location>
    <ligand>
        <name>Mg(2+)</name>
        <dbReference type="ChEBI" id="CHEBI:18420"/>
        <note>catalytic</note>
    </ligand>
</feature>
<feature type="binding site" evidence="1">
    <location>
        <begin position="225"/>
        <end position="227"/>
    </location>
    <ligand>
        <name>substrate</name>
    </ligand>
</feature>
<feature type="binding site" evidence="1">
    <location>
        <begin position="270"/>
        <end position="272"/>
    </location>
    <ligand>
        <name>substrate</name>
    </ligand>
</feature>
<feature type="binding site" evidence="1">
    <location>
        <position position="323"/>
    </location>
    <ligand>
        <name>substrate</name>
    </ligand>
</feature>
<feature type="binding site" evidence="1">
    <location>
        <begin position="378"/>
        <end position="381"/>
    </location>
    <ligand>
        <name>substrate</name>
    </ligand>
</feature>
<feature type="site" description="Important for substrate specificity; cannot use PPi as phosphoryl donor" evidence="1">
    <location>
        <position position="198"/>
    </location>
</feature>
<feature type="mutagenesis site" description="Abolishes catalytic activity." evidence="2">
    <original>K</original>
    <variation>G</variation>
    <location>
        <position position="224"/>
    </location>
</feature>
<name>PFKA_LEIDO</name>